<gene>
    <name evidence="1" type="primary">prfA</name>
    <name type="ordered locus">mll3435</name>
</gene>
<evidence type="ECO:0000255" key="1">
    <source>
        <dbReference type="HAMAP-Rule" id="MF_00093"/>
    </source>
</evidence>
<evidence type="ECO:0000256" key="2">
    <source>
        <dbReference type="SAM" id="MobiDB-lite"/>
    </source>
</evidence>
<sequence>MVNLPRDRMDQVVKRFEMLEAQMSAGPAPDAYVKMASEYAELQDMVAKVRQLRSAEHEQADLEAMLADKGTDAEMRALAEADLPDVEERIEALQKDIQILLLPKDAADDKNAILEIRAGTGGDEAALFAGDLFRMYERYAAERGWRFETVSASDGDAGGFKEIIATVSGKGVFAHLKFESGVHRVQRVPATEASGRIHTSAATVAVLPEAEEVDIEIRAEDIRIDTMRASGSGGQHVNTTDSAVRITHLPTGIMVVQAEKSQHQNRAKAMQILRARLYDLERSKADEERSESRKSQVGSGDRSERIRTYNFPQGRVTDHRINLTLYKLDRVMMGELDEIVDALIADHQSKLLADIGLDG</sequence>
<feature type="chain" id="PRO_0000177727" description="Peptide chain release factor 1">
    <location>
        <begin position="1"/>
        <end position="359"/>
    </location>
</feature>
<feature type="region of interest" description="Disordered" evidence="2">
    <location>
        <begin position="283"/>
        <end position="309"/>
    </location>
</feature>
<feature type="compositionally biased region" description="Basic and acidic residues" evidence="2">
    <location>
        <begin position="283"/>
        <end position="294"/>
    </location>
</feature>
<feature type="modified residue" description="N5-methylglutamine" evidence="1">
    <location>
        <position position="235"/>
    </location>
</feature>
<reference key="1">
    <citation type="journal article" date="2000" name="DNA Res.">
        <title>Complete genome structure of the nitrogen-fixing symbiotic bacterium Mesorhizobium loti.</title>
        <authorList>
            <person name="Kaneko T."/>
            <person name="Nakamura Y."/>
            <person name="Sato S."/>
            <person name="Asamizu E."/>
            <person name="Kato T."/>
            <person name="Sasamoto S."/>
            <person name="Watanabe A."/>
            <person name="Idesawa K."/>
            <person name="Ishikawa A."/>
            <person name="Kawashima K."/>
            <person name="Kimura T."/>
            <person name="Kishida Y."/>
            <person name="Kiyokawa C."/>
            <person name="Kohara M."/>
            <person name="Matsumoto M."/>
            <person name="Matsuno A."/>
            <person name="Mochizuki Y."/>
            <person name="Nakayama S."/>
            <person name="Nakazaki N."/>
            <person name="Shimpo S."/>
            <person name="Sugimoto M."/>
            <person name="Takeuchi C."/>
            <person name="Yamada M."/>
            <person name="Tabata S."/>
        </authorList>
    </citation>
    <scope>NUCLEOTIDE SEQUENCE [LARGE SCALE GENOMIC DNA]</scope>
    <source>
        <strain>LMG 29417 / CECT 9101 / MAFF 303099</strain>
    </source>
</reference>
<dbReference type="EMBL" id="BA000012">
    <property type="protein sequence ID" value="BAB50323.1"/>
    <property type="molecule type" value="Genomic_DNA"/>
</dbReference>
<dbReference type="RefSeq" id="WP_010911669.1">
    <property type="nucleotide sequence ID" value="NC_002678.2"/>
</dbReference>
<dbReference type="SMR" id="Q98G93"/>
<dbReference type="KEGG" id="mlo:mll3435"/>
<dbReference type="PATRIC" id="fig|266835.9.peg.2733"/>
<dbReference type="eggNOG" id="COG0216">
    <property type="taxonomic scope" value="Bacteria"/>
</dbReference>
<dbReference type="HOGENOM" id="CLU_036856_0_1_5"/>
<dbReference type="Proteomes" id="UP000000552">
    <property type="component" value="Chromosome"/>
</dbReference>
<dbReference type="GO" id="GO:0005737">
    <property type="term" value="C:cytoplasm"/>
    <property type="evidence" value="ECO:0007669"/>
    <property type="project" value="UniProtKB-SubCell"/>
</dbReference>
<dbReference type="GO" id="GO:0016149">
    <property type="term" value="F:translation release factor activity, codon specific"/>
    <property type="evidence" value="ECO:0007669"/>
    <property type="project" value="UniProtKB-UniRule"/>
</dbReference>
<dbReference type="FunFam" id="3.30.160.20:FF:000004">
    <property type="entry name" value="Peptide chain release factor 1"/>
    <property type="match status" value="1"/>
</dbReference>
<dbReference type="FunFam" id="3.30.70.1660:FF:000002">
    <property type="entry name" value="Peptide chain release factor 1"/>
    <property type="match status" value="1"/>
</dbReference>
<dbReference type="FunFam" id="3.30.70.1660:FF:000004">
    <property type="entry name" value="Peptide chain release factor 1"/>
    <property type="match status" value="1"/>
</dbReference>
<dbReference type="Gene3D" id="3.30.160.20">
    <property type="match status" value="1"/>
</dbReference>
<dbReference type="Gene3D" id="3.30.70.1660">
    <property type="match status" value="2"/>
</dbReference>
<dbReference type="Gene3D" id="6.10.140.1950">
    <property type="match status" value="1"/>
</dbReference>
<dbReference type="HAMAP" id="MF_00093">
    <property type="entry name" value="Rel_fac_1"/>
    <property type="match status" value="1"/>
</dbReference>
<dbReference type="InterPro" id="IPR005139">
    <property type="entry name" value="PCRF"/>
</dbReference>
<dbReference type="InterPro" id="IPR000352">
    <property type="entry name" value="Pep_chain_release_fac_I"/>
</dbReference>
<dbReference type="InterPro" id="IPR045853">
    <property type="entry name" value="Pep_chain_release_fac_I_sf"/>
</dbReference>
<dbReference type="InterPro" id="IPR050057">
    <property type="entry name" value="Prokaryotic/Mito_RF"/>
</dbReference>
<dbReference type="InterPro" id="IPR004373">
    <property type="entry name" value="RF-1"/>
</dbReference>
<dbReference type="NCBIfam" id="TIGR00019">
    <property type="entry name" value="prfA"/>
    <property type="match status" value="1"/>
</dbReference>
<dbReference type="NCBIfam" id="NF001859">
    <property type="entry name" value="PRK00591.1"/>
    <property type="match status" value="1"/>
</dbReference>
<dbReference type="PANTHER" id="PTHR43804">
    <property type="entry name" value="LD18447P"/>
    <property type="match status" value="1"/>
</dbReference>
<dbReference type="PANTHER" id="PTHR43804:SF7">
    <property type="entry name" value="LD18447P"/>
    <property type="match status" value="1"/>
</dbReference>
<dbReference type="Pfam" id="PF03462">
    <property type="entry name" value="PCRF"/>
    <property type="match status" value="1"/>
</dbReference>
<dbReference type="Pfam" id="PF00472">
    <property type="entry name" value="RF-1"/>
    <property type="match status" value="1"/>
</dbReference>
<dbReference type="SMART" id="SM00937">
    <property type="entry name" value="PCRF"/>
    <property type="match status" value="1"/>
</dbReference>
<dbReference type="SUPFAM" id="SSF75620">
    <property type="entry name" value="Release factor"/>
    <property type="match status" value="1"/>
</dbReference>
<dbReference type="PROSITE" id="PS00745">
    <property type="entry name" value="RF_PROK_I"/>
    <property type="match status" value="1"/>
</dbReference>
<proteinExistence type="inferred from homology"/>
<comment type="function">
    <text evidence="1">Peptide chain release factor 1 directs the termination of translation in response to the peptide chain termination codons UAG and UAA.</text>
</comment>
<comment type="subcellular location">
    <subcellularLocation>
        <location evidence="1">Cytoplasm</location>
    </subcellularLocation>
</comment>
<comment type="PTM">
    <text evidence="1">Methylated by PrmC. Methylation increases the termination efficiency of RF1.</text>
</comment>
<comment type="similarity">
    <text evidence="1">Belongs to the prokaryotic/mitochondrial release factor family.</text>
</comment>
<name>RF1_RHILO</name>
<organism>
    <name type="scientific">Mesorhizobium japonicum (strain LMG 29417 / CECT 9101 / MAFF 303099)</name>
    <name type="common">Mesorhizobium loti (strain MAFF 303099)</name>
    <dbReference type="NCBI Taxonomy" id="266835"/>
    <lineage>
        <taxon>Bacteria</taxon>
        <taxon>Pseudomonadati</taxon>
        <taxon>Pseudomonadota</taxon>
        <taxon>Alphaproteobacteria</taxon>
        <taxon>Hyphomicrobiales</taxon>
        <taxon>Phyllobacteriaceae</taxon>
        <taxon>Mesorhizobium</taxon>
    </lineage>
</organism>
<keyword id="KW-0963">Cytoplasm</keyword>
<keyword id="KW-0488">Methylation</keyword>
<keyword id="KW-0648">Protein biosynthesis</keyword>
<accession>Q98G93</accession>
<protein>
    <recommendedName>
        <fullName evidence="1">Peptide chain release factor 1</fullName>
        <shortName evidence="1">RF-1</shortName>
    </recommendedName>
</protein>